<gene>
    <name type="primary">gh</name>
</gene>
<organism>
    <name type="scientific">Seriola quinqueradiata</name>
    <name type="common">Five-ray yellowtail</name>
    <dbReference type="NCBI Taxonomy" id="8161"/>
    <lineage>
        <taxon>Eukaryota</taxon>
        <taxon>Metazoa</taxon>
        <taxon>Chordata</taxon>
        <taxon>Craniata</taxon>
        <taxon>Vertebrata</taxon>
        <taxon>Euteleostomi</taxon>
        <taxon>Actinopterygii</taxon>
        <taxon>Neopterygii</taxon>
        <taxon>Teleostei</taxon>
        <taxon>Neoteleostei</taxon>
        <taxon>Acanthomorphata</taxon>
        <taxon>Carangaria</taxon>
        <taxon>Carangiformes</taxon>
        <taxon>Carangidae</taxon>
        <taxon>Seriola</taxon>
    </lineage>
</organism>
<feature type="signal peptide" evidence="1">
    <location>
        <begin position="1"/>
        <end position="17"/>
    </location>
</feature>
<feature type="chain" id="PRO_0000033054" description="Somatotropin">
    <location>
        <begin position="18"/>
        <end position="204"/>
    </location>
</feature>
<feature type="modified residue" description="Pyrrolidone carboxylic acid" evidence="1">
    <location>
        <position position="18"/>
    </location>
</feature>
<feature type="disulfide bond" evidence="1">
    <location>
        <begin position="69"/>
        <end position="177"/>
    </location>
</feature>
<feature type="disulfide bond" evidence="1">
    <location>
        <begin position="194"/>
        <end position="202"/>
    </location>
</feature>
<protein>
    <recommendedName>
        <fullName>Somatotropin</fullName>
    </recommendedName>
    <alternativeName>
        <fullName>Growth hormone</fullName>
    </alternativeName>
</protein>
<keyword id="KW-1015">Disulfide bond</keyword>
<keyword id="KW-0372">Hormone</keyword>
<keyword id="KW-0873">Pyrrolidone carboxylic acid</keyword>
<keyword id="KW-0964">Secreted</keyword>
<keyword id="KW-0732">Signal</keyword>
<reference key="1">
    <citation type="journal article" date="1988" name="Gen. Comp. Endocrinol.">
        <title>cDNA cloning and primary structure of yellow tail (Seriola quinqueradiata) pregrowth hormone.</title>
        <authorList>
            <person name="Watahiki M."/>
            <person name="Tanaka M."/>
            <person name="Masuda N."/>
            <person name="Yamakawa M."/>
            <person name="Yoneda Y."/>
            <person name="Nakashima K."/>
        </authorList>
    </citation>
    <scope>NUCLEOTIDE SEQUENCE [MRNA]</scope>
    <source>
        <tissue>Pituitary</tissue>
    </source>
</reference>
<sequence length="204" mass="23112">MDRVVLLLSVLSLGVSSQPITDSQHLFSIAVSRIQNLHLLAQRLFSNFESTLQTEDQRQLNKIFLQDFCNSDYIISPIDKHETQRSSVLKLLSISYRLVESWEFSSRFLSGGSALRNQISPRLSELKTGIQLLITANQDGAEMFSDVSALQLAPYGNFYQSLGGEELLRRNYELLACFKKDMHKVETYLTVAKCRLSPEANCTL</sequence>
<name>SOMA_SERQU</name>
<proteinExistence type="evidence at transcript level"/>
<evidence type="ECO:0000250" key="1"/>
<evidence type="ECO:0000305" key="2"/>
<dbReference type="EMBL" id="M35627">
    <property type="protein sequence ID" value="AAA49545.1"/>
    <property type="molecule type" value="mRNA"/>
</dbReference>
<dbReference type="PIR" id="S06389">
    <property type="entry name" value="STFI"/>
</dbReference>
<dbReference type="SMR" id="P09539"/>
<dbReference type="GO" id="GO:0005615">
    <property type="term" value="C:extracellular space"/>
    <property type="evidence" value="ECO:0007669"/>
    <property type="project" value="InterPro"/>
</dbReference>
<dbReference type="GO" id="GO:0070186">
    <property type="term" value="F:growth hormone activity"/>
    <property type="evidence" value="ECO:0007669"/>
    <property type="project" value="TreeGrafter"/>
</dbReference>
<dbReference type="GO" id="GO:0005131">
    <property type="term" value="F:growth hormone receptor binding"/>
    <property type="evidence" value="ECO:0007669"/>
    <property type="project" value="InterPro"/>
</dbReference>
<dbReference type="GO" id="GO:0048513">
    <property type="term" value="P:animal organ development"/>
    <property type="evidence" value="ECO:0007669"/>
    <property type="project" value="TreeGrafter"/>
</dbReference>
<dbReference type="GO" id="GO:0060396">
    <property type="term" value="P:growth hormone receptor signaling pathway"/>
    <property type="evidence" value="ECO:0007669"/>
    <property type="project" value="TreeGrafter"/>
</dbReference>
<dbReference type="GO" id="GO:0045927">
    <property type="term" value="P:positive regulation of growth"/>
    <property type="evidence" value="ECO:0007669"/>
    <property type="project" value="TreeGrafter"/>
</dbReference>
<dbReference type="GO" id="GO:0046427">
    <property type="term" value="P:positive regulation of receptor signaling pathway via JAK-STAT"/>
    <property type="evidence" value="ECO:0007669"/>
    <property type="project" value="TreeGrafter"/>
</dbReference>
<dbReference type="GO" id="GO:0031667">
    <property type="term" value="P:response to nutrient levels"/>
    <property type="evidence" value="ECO:0007669"/>
    <property type="project" value="TreeGrafter"/>
</dbReference>
<dbReference type="CDD" id="cd10285">
    <property type="entry name" value="somatotropin_like"/>
    <property type="match status" value="1"/>
</dbReference>
<dbReference type="FunFam" id="1.20.1250.10:FF:000009">
    <property type="entry name" value="Growth hormone"/>
    <property type="match status" value="1"/>
</dbReference>
<dbReference type="Gene3D" id="1.20.1250.10">
    <property type="match status" value="1"/>
</dbReference>
<dbReference type="InterPro" id="IPR009079">
    <property type="entry name" value="4_helix_cytokine-like_core"/>
</dbReference>
<dbReference type="InterPro" id="IPR034975">
    <property type="entry name" value="Somatotropin"/>
</dbReference>
<dbReference type="InterPro" id="IPR001400">
    <property type="entry name" value="Somatotropin/Prolactin"/>
</dbReference>
<dbReference type="InterPro" id="IPR018116">
    <property type="entry name" value="Somatotropin_CS"/>
</dbReference>
<dbReference type="PANTHER" id="PTHR11417:SF2">
    <property type="entry name" value="SOMATOTROPIN"/>
    <property type="match status" value="1"/>
</dbReference>
<dbReference type="PANTHER" id="PTHR11417">
    <property type="entry name" value="SOMATOTROPIN,PROLACTIN"/>
    <property type="match status" value="1"/>
</dbReference>
<dbReference type="Pfam" id="PF00103">
    <property type="entry name" value="Hormone_1"/>
    <property type="match status" value="1"/>
</dbReference>
<dbReference type="PRINTS" id="PR00836">
    <property type="entry name" value="SOMATOTROPIN"/>
</dbReference>
<dbReference type="SUPFAM" id="SSF47266">
    <property type="entry name" value="4-helical cytokines"/>
    <property type="match status" value="1"/>
</dbReference>
<dbReference type="PROSITE" id="PS00266">
    <property type="entry name" value="SOMATOTROPIN_1"/>
    <property type="match status" value="1"/>
</dbReference>
<dbReference type="PROSITE" id="PS00338">
    <property type="entry name" value="SOMATOTROPIN_2"/>
    <property type="match status" value="1"/>
</dbReference>
<accession>P09539</accession>
<comment type="function">
    <text>Growth hormone plays an important role in growth control and is involved in the regulation of several anabolic processes. Implicated as an osmoregulatory substance important for seawater adaptation.</text>
</comment>
<comment type="subcellular location">
    <subcellularLocation>
        <location>Secreted</location>
    </subcellularLocation>
</comment>
<comment type="similarity">
    <text evidence="2">Belongs to the somatotropin/prolactin family.</text>
</comment>